<comment type="function">
    <text evidence="1">May be involved in transcriptional regulation.</text>
</comment>
<comment type="subcellular location">
    <subcellularLocation>
        <location evidence="4">Nucleus</location>
    </subcellularLocation>
</comment>
<comment type="similarity">
    <text evidence="4">Belongs to the krueppel C2H2-type zinc-finger protein family.</text>
</comment>
<name>ZNF66_HUMAN</name>
<gene>
    <name type="primary">ZNF66</name>
    <name type="synonym">ZNF66P</name>
</gene>
<proteinExistence type="evidence at protein level"/>
<protein>
    <recommendedName>
        <fullName>Zinc finger protein 66</fullName>
    </recommendedName>
</protein>
<evidence type="ECO:0000250" key="1"/>
<evidence type="ECO:0000255" key="2">
    <source>
        <dbReference type="PROSITE-ProRule" id="PRU00042"/>
    </source>
</evidence>
<evidence type="ECO:0000255" key="3">
    <source>
        <dbReference type="PROSITE-ProRule" id="PRU00119"/>
    </source>
</evidence>
<evidence type="ECO:0000305" key="4"/>
<sequence length="573" mass="65874">MGPLQFRDVAIEFSLEEWHCLDMAQRNLYRDVMLENYRNLVFLGIVVSKPDLITHLEQGKKPSTMQRHEMVANPSVLCSHFNQDLWPEQSIKDSFQKLILRRHKKCGHDNLQLKKGCESVDKCKVHKRGYNGLNQCLTTTQSKMFQCDKHGKVFHQFSNTNRHKIRHTGKNPCKFTECGKAFNRSSTFTTHKKIHTGEKPYKCIECGKAFNRSSHLTTHKIIHTGEKRYKCEDCGKAFNRSSNLTTHKKIHTGEKPYKCEECGKAFKRSSILTTHKRIHTGEKPYKCEECGKVFKYLSSLSTHKIIHTGEKPYKCEECGKAFNWSSHLTTHKRIHTGEKPYKCEECGKGFKYSSTLTKHKIIHTGEKPYKCEECGEAFKYSCSLTAHKIIHTGKKPYKCEECGKVFKHSSPLSKHKRIHTGEKPYKCEECGKAFSRSSILTTHKIIHTGEKPYECEDCGKAFNRSSNLTKHKKIHTGEKPYKCEECGKAFKCSSILTTHKRIHTADKPYKCEECGKDFKYSSTLTRHKKIHTGGKPHKCNKCGKAFISSSNLSRHEIIHMGGNPYKCENVAKP</sequence>
<reference key="1">
    <citation type="journal article" date="2004" name="Nature">
        <title>The DNA sequence and biology of human chromosome 19.</title>
        <authorList>
            <person name="Grimwood J."/>
            <person name="Gordon L.A."/>
            <person name="Olsen A.S."/>
            <person name="Terry A."/>
            <person name="Schmutz J."/>
            <person name="Lamerdin J.E."/>
            <person name="Hellsten U."/>
            <person name="Goodstein D."/>
            <person name="Couronne O."/>
            <person name="Tran-Gyamfi M."/>
            <person name="Aerts A."/>
            <person name="Altherr M."/>
            <person name="Ashworth L."/>
            <person name="Bajorek E."/>
            <person name="Black S."/>
            <person name="Branscomb E."/>
            <person name="Caenepeel S."/>
            <person name="Carrano A.V."/>
            <person name="Caoile C."/>
            <person name="Chan Y.M."/>
            <person name="Christensen M."/>
            <person name="Cleland C.A."/>
            <person name="Copeland A."/>
            <person name="Dalin E."/>
            <person name="Dehal P."/>
            <person name="Denys M."/>
            <person name="Detter J.C."/>
            <person name="Escobar J."/>
            <person name="Flowers D."/>
            <person name="Fotopulos D."/>
            <person name="Garcia C."/>
            <person name="Georgescu A.M."/>
            <person name="Glavina T."/>
            <person name="Gomez M."/>
            <person name="Gonzales E."/>
            <person name="Groza M."/>
            <person name="Hammon N."/>
            <person name="Hawkins T."/>
            <person name="Haydu L."/>
            <person name="Ho I."/>
            <person name="Huang W."/>
            <person name="Israni S."/>
            <person name="Jett J."/>
            <person name="Kadner K."/>
            <person name="Kimball H."/>
            <person name="Kobayashi A."/>
            <person name="Larionov V."/>
            <person name="Leem S.-H."/>
            <person name="Lopez F."/>
            <person name="Lou Y."/>
            <person name="Lowry S."/>
            <person name="Malfatti S."/>
            <person name="Martinez D."/>
            <person name="McCready P.M."/>
            <person name="Medina C."/>
            <person name="Morgan J."/>
            <person name="Nelson K."/>
            <person name="Nolan M."/>
            <person name="Ovcharenko I."/>
            <person name="Pitluck S."/>
            <person name="Pollard M."/>
            <person name="Popkie A.P."/>
            <person name="Predki P."/>
            <person name="Quan G."/>
            <person name="Ramirez L."/>
            <person name="Rash S."/>
            <person name="Retterer J."/>
            <person name="Rodriguez A."/>
            <person name="Rogers S."/>
            <person name="Salamov A."/>
            <person name="Salazar A."/>
            <person name="She X."/>
            <person name="Smith D."/>
            <person name="Slezak T."/>
            <person name="Solovyev V."/>
            <person name="Thayer N."/>
            <person name="Tice H."/>
            <person name="Tsai M."/>
            <person name="Ustaszewska A."/>
            <person name="Vo N."/>
            <person name="Wagner M."/>
            <person name="Wheeler J."/>
            <person name="Wu K."/>
            <person name="Xie G."/>
            <person name="Yang J."/>
            <person name="Dubchak I."/>
            <person name="Furey T.S."/>
            <person name="DeJong P."/>
            <person name="Dickson M."/>
            <person name="Gordon D."/>
            <person name="Eichler E.E."/>
            <person name="Pennacchio L.A."/>
            <person name="Richardson P."/>
            <person name="Stubbs L."/>
            <person name="Rokhsar D.S."/>
            <person name="Myers R.M."/>
            <person name="Rubin E.M."/>
            <person name="Lucas S.M."/>
        </authorList>
    </citation>
    <scope>NUCLEOTIDE SEQUENCE [LARGE SCALE GENOMIC DNA]</scope>
</reference>
<reference key="2">
    <citation type="journal article" date="1991" name="Proc. Natl. Acad. Sci. U.S.A.">
        <title>Characterization and mapping of human genes encoding zinc finger proteins.</title>
        <authorList>
            <person name="Bray P.L."/>
            <person name="Lichter P."/>
            <person name="Thiesen H.-J."/>
            <person name="Ward D.C."/>
            <person name="Dawid I.B."/>
        </authorList>
    </citation>
    <scope>NUCLEOTIDE SEQUENCE [GENOMIC DNA] OF 297-351</scope>
</reference>
<dbReference type="EMBL" id="AC010329">
    <property type="status" value="NOT_ANNOTATED_CDS"/>
    <property type="molecule type" value="Genomic_DNA"/>
</dbReference>
<dbReference type="EMBL" id="M88375">
    <property type="protein sequence ID" value="AAA61333.1"/>
    <property type="molecule type" value="Genomic_DNA"/>
</dbReference>
<dbReference type="CCDS" id="CCDS92572.1"/>
<dbReference type="PIR" id="I45193">
    <property type="entry name" value="I45193"/>
</dbReference>
<dbReference type="RefSeq" id="NP_001342126.2">
    <property type="nucleotide sequence ID" value="NM_001355197.2"/>
</dbReference>
<dbReference type="SMR" id="Q6ZN08"/>
<dbReference type="FunCoup" id="Q6ZN08">
    <property type="interactions" value="88"/>
</dbReference>
<dbReference type="IntAct" id="Q6ZN08">
    <property type="interactions" value="6"/>
</dbReference>
<dbReference type="GlyGen" id="Q6ZN08">
    <property type="glycosylation" value="1 site, 1 O-linked glycan (1 site)"/>
</dbReference>
<dbReference type="iPTMnet" id="Q6ZN08"/>
<dbReference type="PhosphoSitePlus" id="Q6ZN08"/>
<dbReference type="BioMuta" id="ZNF66"/>
<dbReference type="DMDM" id="519668683"/>
<dbReference type="jPOST" id="Q6ZN08"/>
<dbReference type="MassIVE" id="Q6ZN08"/>
<dbReference type="PaxDb" id="9606-ENSP00000461425"/>
<dbReference type="PeptideAtlas" id="Q6ZN08"/>
<dbReference type="ProteomicsDB" id="47557"/>
<dbReference type="ProteomicsDB" id="67953"/>
<dbReference type="Pumba" id="Q6ZN08"/>
<dbReference type="Ensembl" id="ENST00000344519.10">
    <property type="protein sequence ID" value="ENSP00000461425.1"/>
    <property type="gene ID" value="ENSG00000160229.13"/>
</dbReference>
<dbReference type="GeneID" id="7617"/>
<dbReference type="MANE-Select" id="ENST00000344519.10">
    <property type="protein sequence ID" value="ENSP00000461425.1"/>
    <property type="RefSeq nucleotide sequence ID" value="NM_001355197.2"/>
    <property type="RefSeq protein sequence ID" value="NP_001342126.2"/>
</dbReference>
<dbReference type="UCSC" id="uc060wfa.1">
    <property type="organism name" value="human"/>
</dbReference>
<dbReference type="AGR" id="HGNC:13135"/>
<dbReference type="GeneCards" id="ZNF66"/>
<dbReference type="HGNC" id="HGNC:13135">
    <property type="gene designation" value="ZNF66"/>
</dbReference>
<dbReference type="HPA" id="ENSG00000160229">
    <property type="expression patterns" value="Low tissue specificity"/>
</dbReference>
<dbReference type="neXtProt" id="NX_Q6ZN08"/>
<dbReference type="OpenTargets" id="ENSG00000160229"/>
<dbReference type="VEuPathDB" id="HostDB:ENSG00000160229"/>
<dbReference type="eggNOG" id="KOG1721">
    <property type="taxonomic scope" value="Eukaryota"/>
</dbReference>
<dbReference type="GeneTree" id="ENSGT01130000278311"/>
<dbReference type="HOGENOM" id="CLU_002678_44_5_1"/>
<dbReference type="InParanoid" id="Q6ZN08"/>
<dbReference type="OMA" id="NQDLWPE"/>
<dbReference type="OrthoDB" id="9537077at2759"/>
<dbReference type="PAN-GO" id="Q6ZN08">
    <property type="GO annotations" value="3 GO annotations based on evolutionary models"/>
</dbReference>
<dbReference type="PhylomeDB" id="Q6ZN08"/>
<dbReference type="TreeFam" id="TF342117"/>
<dbReference type="PathwayCommons" id="Q6ZN08"/>
<dbReference type="ChiTaRS" id="ZNF66">
    <property type="organism name" value="human"/>
</dbReference>
<dbReference type="Pharos" id="Q6ZN08">
    <property type="development level" value="Tdark"/>
</dbReference>
<dbReference type="PRO" id="PR:Q6ZN08"/>
<dbReference type="Proteomes" id="UP000005640">
    <property type="component" value="Chromosome 19"/>
</dbReference>
<dbReference type="RNAct" id="Q6ZN08">
    <property type="molecule type" value="protein"/>
</dbReference>
<dbReference type="Bgee" id="ENSG00000160229">
    <property type="expression patterns" value="Expressed in male germ line stem cell (sensu Vertebrata) in testis and 109 other cell types or tissues"/>
</dbReference>
<dbReference type="ExpressionAtlas" id="Q6ZN08">
    <property type="expression patterns" value="baseline and differential"/>
</dbReference>
<dbReference type="GO" id="GO:0005634">
    <property type="term" value="C:nucleus"/>
    <property type="evidence" value="ECO:0007669"/>
    <property type="project" value="UniProtKB-SubCell"/>
</dbReference>
<dbReference type="GO" id="GO:0000981">
    <property type="term" value="F:DNA-binding transcription factor activity, RNA polymerase II-specific"/>
    <property type="evidence" value="ECO:0000318"/>
    <property type="project" value="GO_Central"/>
</dbReference>
<dbReference type="GO" id="GO:0000978">
    <property type="term" value="F:RNA polymerase II cis-regulatory region sequence-specific DNA binding"/>
    <property type="evidence" value="ECO:0000318"/>
    <property type="project" value="GO_Central"/>
</dbReference>
<dbReference type="GO" id="GO:0008270">
    <property type="term" value="F:zinc ion binding"/>
    <property type="evidence" value="ECO:0007669"/>
    <property type="project" value="UniProtKB-KW"/>
</dbReference>
<dbReference type="GO" id="GO:0006355">
    <property type="term" value="P:regulation of DNA-templated transcription"/>
    <property type="evidence" value="ECO:0000318"/>
    <property type="project" value="GO_Central"/>
</dbReference>
<dbReference type="CDD" id="cd07765">
    <property type="entry name" value="KRAB_A-box"/>
    <property type="match status" value="1"/>
</dbReference>
<dbReference type="FunFam" id="3.30.160.60:FF:000688">
    <property type="entry name" value="zinc finger protein 197 isoform X1"/>
    <property type="match status" value="1"/>
</dbReference>
<dbReference type="FunFam" id="3.30.160.60:FF:001868">
    <property type="entry name" value="Zinc finger protein 264"/>
    <property type="match status" value="2"/>
</dbReference>
<dbReference type="FunFam" id="3.30.160.60:FF:001181">
    <property type="entry name" value="Zinc finger protein 311"/>
    <property type="match status" value="3"/>
</dbReference>
<dbReference type="FunFam" id="3.30.160.60:FF:000120">
    <property type="entry name" value="Zinc finger protein 430"/>
    <property type="match status" value="5"/>
</dbReference>
<dbReference type="FunFam" id="3.30.160.60:FF:002090">
    <property type="entry name" value="Zinc finger protein 473"/>
    <property type="match status" value="1"/>
</dbReference>
<dbReference type="FunFam" id="3.30.160.60:FF:000362">
    <property type="entry name" value="Zinc finger protein 606"/>
    <property type="match status" value="1"/>
</dbReference>
<dbReference type="FunFam" id="3.30.160.60:FF:002483">
    <property type="entry name" value="Zinc finger protein 90"/>
    <property type="match status" value="1"/>
</dbReference>
<dbReference type="Gene3D" id="6.10.140.140">
    <property type="match status" value="1"/>
</dbReference>
<dbReference type="Gene3D" id="3.30.160.60">
    <property type="entry name" value="Classic Zinc Finger"/>
    <property type="match status" value="14"/>
</dbReference>
<dbReference type="InterPro" id="IPR001909">
    <property type="entry name" value="KRAB"/>
</dbReference>
<dbReference type="InterPro" id="IPR036051">
    <property type="entry name" value="KRAB_dom_sf"/>
</dbReference>
<dbReference type="InterPro" id="IPR036236">
    <property type="entry name" value="Znf_C2H2_sf"/>
</dbReference>
<dbReference type="InterPro" id="IPR013087">
    <property type="entry name" value="Znf_C2H2_type"/>
</dbReference>
<dbReference type="PANTHER" id="PTHR24399:SF75">
    <property type="entry name" value="ZFP14 ZINC FINGER PROTEIN-RELATED"/>
    <property type="match status" value="1"/>
</dbReference>
<dbReference type="PANTHER" id="PTHR24399">
    <property type="entry name" value="ZINC FINGER AND BTB DOMAIN-CONTAINING"/>
    <property type="match status" value="1"/>
</dbReference>
<dbReference type="Pfam" id="PF01352">
    <property type="entry name" value="KRAB"/>
    <property type="match status" value="1"/>
</dbReference>
<dbReference type="Pfam" id="PF00096">
    <property type="entry name" value="zf-C2H2"/>
    <property type="match status" value="13"/>
</dbReference>
<dbReference type="SMART" id="SM00349">
    <property type="entry name" value="KRAB"/>
    <property type="match status" value="1"/>
</dbReference>
<dbReference type="SMART" id="SM00355">
    <property type="entry name" value="ZnF_C2H2"/>
    <property type="match status" value="15"/>
</dbReference>
<dbReference type="SUPFAM" id="SSF57667">
    <property type="entry name" value="beta-beta-alpha zinc fingers"/>
    <property type="match status" value="8"/>
</dbReference>
<dbReference type="SUPFAM" id="SSF109640">
    <property type="entry name" value="KRAB domain (Kruppel-associated box)"/>
    <property type="match status" value="1"/>
</dbReference>
<dbReference type="PROSITE" id="PS50805">
    <property type="entry name" value="KRAB"/>
    <property type="match status" value="1"/>
</dbReference>
<dbReference type="PROSITE" id="PS00028">
    <property type="entry name" value="ZINC_FINGER_C2H2_1"/>
    <property type="match status" value="14"/>
</dbReference>
<dbReference type="PROSITE" id="PS50157">
    <property type="entry name" value="ZINC_FINGER_C2H2_2"/>
    <property type="match status" value="15"/>
</dbReference>
<dbReference type="PROSITE" id="PS00142">
    <property type="entry name" value="ZINC_PROTEASE"/>
    <property type="match status" value="1"/>
</dbReference>
<accession>Q6ZN08</accession>
<accession>I3L4P5</accession>
<accession>Q15939</accession>
<organism>
    <name type="scientific">Homo sapiens</name>
    <name type="common">Human</name>
    <dbReference type="NCBI Taxonomy" id="9606"/>
    <lineage>
        <taxon>Eukaryota</taxon>
        <taxon>Metazoa</taxon>
        <taxon>Chordata</taxon>
        <taxon>Craniata</taxon>
        <taxon>Vertebrata</taxon>
        <taxon>Euteleostomi</taxon>
        <taxon>Mammalia</taxon>
        <taxon>Eutheria</taxon>
        <taxon>Euarchontoglires</taxon>
        <taxon>Primates</taxon>
        <taxon>Haplorrhini</taxon>
        <taxon>Catarrhini</taxon>
        <taxon>Hominidae</taxon>
        <taxon>Homo</taxon>
    </lineage>
</organism>
<feature type="chain" id="PRO_0000304992" description="Zinc finger protein 66">
    <location>
        <begin position="1"/>
        <end position="573"/>
    </location>
</feature>
<feature type="domain" description="KRAB" evidence="3">
    <location>
        <begin position="4"/>
        <end position="75"/>
    </location>
</feature>
<feature type="zinc finger region" description="C2H2-type 1; atypical" evidence="2">
    <location>
        <begin position="145"/>
        <end position="167"/>
    </location>
</feature>
<feature type="zinc finger region" description="C2H2-type 2" evidence="2">
    <location>
        <begin position="171"/>
        <end position="195"/>
    </location>
</feature>
<feature type="zinc finger region" description="C2H2-type 3" evidence="2">
    <location>
        <begin position="201"/>
        <end position="223"/>
    </location>
</feature>
<feature type="zinc finger region" description="C2H2-type 4" evidence="2">
    <location>
        <begin position="229"/>
        <end position="251"/>
    </location>
</feature>
<feature type="zinc finger region" description="C2H2-type 5" evidence="2">
    <location>
        <begin position="257"/>
        <end position="279"/>
    </location>
</feature>
<feature type="zinc finger region" description="C2H2-type 6" evidence="2">
    <location>
        <begin position="285"/>
        <end position="307"/>
    </location>
</feature>
<feature type="zinc finger region" description="C2H2-type 7" evidence="2">
    <location>
        <begin position="313"/>
        <end position="335"/>
    </location>
</feature>
<feature type="zinc finger region" description="C2H2-type 8" evidence="2">
    <location>
        <begin position="341"/>
        <end position="363"/>
    </location>
</feature>
<feature type="zinc finger region" description="C2H2-type 9" evidence="2">
    <location>
        <begin position="369"/>
        <end position="391"/>
    </location>
</feature>
<feature type="zinc finger region" description="C2H2-type 10" evidence="2">
    <location>
        <begin position="397"/>
        <end position="419"/>
    </location>
</feature>
<feature type="zinc finger region" description="C2H2-type 11" evidence="2">
    <location>
        <begin position="425"/>
        <end position="447"/>
    </location>
</feature>
<feature type="zinc finger region" description="C2H2-type 12" evidence="2">
    <location>
        <begin position="453"/>
        <end position="475"/>
    </location>
</feature>
<feature type="zinc finger region" description="C2H2-type 13" evidence="2">
    <location>
        <begin position="481"/>
        <end position="503"/>
    </location>
</feature>
<feature type="zinc finger region" description="C2H2-type 14" evidence="2">
    <location>
        <begin position="509"/>
        <end position="531"/>
    </location>
</feature>
<feature type="zinc finger region" description="C2H2-type 15" evidence="2">
    <location>
        <begin position="537"/>
        <end position="559"/>
    </location>
</feature>
<feature type="sequence conflict" description="In Ref. 2; AAA61333." evidence="4" ref="2">
    <original>G</original>
    <variation>S</variation>
    <location>
        <position position="349"/>
    </location>
</feature>
<keyword id="KW-0238">DNA-binding</keyword>
<keyword id="KW-0479">Metal-binding</keyword>
<keyword id="KW-0539">Nucleus</keyword>
<keyword id="KW-1267">Proteomics identification</keyword>
<keyword id="KW-1185">Reference proteome</keyword>
<keyword id="KW-0677">Repeat</keyword>
<keyword id="KW-0804">Transcription</keyword>
<keyword id="KW-0805">Transcription regulation</keyword>
<keyword id="KW-0862">Zinc</keyword>
<keyword id="KW-0863">Zinc-finger</keyword>